<protein>
    <recommendedName>
        <fullName>Ig heavy chain V region 1-62-3</fullName>
    </recommendedName>
    <alternativeName>
        <fullName>Ig heavy chain V region 145</fullName>
    </alternativeName>
</protein>
<organism>
    <name type="scientific">Mus musculus</name>
    <name type="common">Mouse</name>
    <dbReference type="NCBI Taxonomy" id="10090"/>
    <lineage>
        <taxon>Eukaryota</taxon>
        <taxon>Metazoa</taxon>
        <taxon>Chordata</taxon>
        <taxon>Craniata</taxon>
        <taxon>Vertebrata</taxon>
        <taxon>Euteleostomi</taxon>
        <taxon>Mammalia</taxon>
        <taxon>Eutheria</taxon>
        <taxon>Euarchontoglires</taxon>
        <taxon>Glires</taxon>
        <taxon>Rodentia</taxon>
        <taxon>Myomorpha</taxon>
        <taxon>Muroidea</taxon>
        <taxon>Muridae</taxon>
        <taxon>Murinae</taxon>
        <taxon>Mus</taxon>
        <taxon>Mus</taxon>
    </lineage>
</organism>
<reference key="1">
    <citation type="journal article" date="1981" name="Cell">
        <title>Heavy chain variable region contribution to the NPb family of antibodies: somatic mutation evident in a gamma 2a variable region.</title>
        <authorList>
            <person name="Bothwell A.L.M."/>
            <person name="Paskind M."/>
            <person name="Reth M."/>
            <person name="Imanishi-Kari T."/>
            <person name="Rajewsky K."/>
            <person name="Baltimore D."/>
        </authorList>
    </citation>
    <scope>NUCLEOTIDE SEQUENCE [GENOMIC DNA]</scope>
    <source>
        <strain>C57BL/6J</strain>
    </source>
</reference>
<dbReference type="EMBL" id="J00533">
    <property type="protein sequence ID" value="AAA38602.1"/>
    <property type="molecule type" value="Genomic_DNA"/>
</dbReference>
<dbReference type="PIR" id="C90809">
    <property type="entry name" value="HVMS45"/>
</dbReference>
<dbReference type="SMR" id="P01754"/>
<dbReference type="FunCoup" id="P01754">
    <property type="interactions" value="579"/>
</dbReference>
<dbReference type="jPOST" id="P01754"/>
<dbReference type="PeptideAtlas" id="P01754"/>
<dbReference type="ProteomicsDB" id="273212"/>
<dbReference type="Ensembl" id="ENSMUST00000103532.3">
    <property type="protein sequence ID" value="ENSMUSP00000100313.2"/>
    <property type="gene ID" value="ENSMUSG00000096767.3"/>
</dbReference>
<dbReference type="AGR" id="MGI:3648544"/>
<dbReference type="MGI" id="MGI:3648544">
    <property type="gene designation" value="Ighv1-62-3"/>
</dbReference>
<dbReference type="VEuPathDB" id="HostDB:ENSMUSG00000096767"/>
<dbReference type="GeneTree" id="ENSGT00950000183013"/>
<dbReference type="HOGENOM" id="CLU_077975_5_2_1"/>
<dbReference type="InParanoid" id="P01754"/>
<dbReference type="OMA" id="NDNTHYA"/>
<dbReference type="OrthoDB" id="9901223at2759"/>
<dbReference type="PhylomeDB" id="P01754"/>
<dbReference type="TreeFam" id="TF336708"/>
<dbReference type="PRO" id="PR:P01754"/>
<dbReference type="Proteomes" id="UP000000589">
    <property type="component" value="Chromosome 12"/>
</dbReference>
<dbReference type="RNAct" id="P01754">
    <property type="molecule type" value="protein"/>
</dbReference>
<dbReference type="Bgee" id="ENSMUSG00000096767">
    <property type="expression patterns" value="Expressed in granulocyte and 7 other cell types or tissues"/>
</dbReference>
<dbReference type="GO" id="GO:0005576">
    <property type="term" value="C:extracellular region"/>
    <property type="evidence" value="ECO:0007669"/>
    <property type="project" value="UniProtKB-ARBA"/>
</dbReference>
<dbReference type="GO" id="GO:0019814">
    <property type="term" value="C:immunoglobulin complex"/>
    <property type="evidence" value="ECO:0007669"/>
    <property type="project" value="UniProtKB-KW"/>
</dbReference>
<dbReference type="GO" id="GO:0002250">
    <property type="term" value="P:adaptive immune response"/>
    <property type="evidence" value="ECO:0007669"/>
    <property type="project" value="UniProtKB-KW"/>
</dbReference>
<dbReference type="CDD" id="cd04981">
    <property type="entry name" value="IgV_H"/>
    <property type="match status" value="1"/>
</dbReference>
<dbReference type="FunFam" id="2.60.40.10:FF:001025">
    <property type="entry name" value="Immunoglobulin heavy variable V1-74"/>
    <property type="match status" value="1"/>
</dbReference>
<dbReference type="Gene3D" id="2.60.40.10">
    <property type="entry name" value="Immunoglobulins"/>
    <property type="match status" value="1"/>
</dbReference>
<dbReference type="InterPro" id="IPR007110">
    <property type="entry name" value="Ig-like_dom"/>
</dbReference>
<dbReference type="InterPro" id="IPR036179">
    <property type="entry name" value="Ig-like_dom_sf"/>
</dbReference>
<dbReference type="InterPro" id="IPR013783">
    <property type="entry name" value="Ig-like_fold"/>
</dbReference>
<dbReference type="InterPro" id="IPR013106">
    <property type="entry name" value="Ig_V-set"/>
</dbReference>
<dbReference type="InterPro" id="IPR050199">
    <property type="entry name" value="IgHV"/>
</dbReference>
<dbReference type="PANTHER" id="PTHR23266">
    <property type="entry name" value="IMMUNOGLOBULIN HEAVY CHAIN"/>
    <property type="match status" value="1"/>
</dbReference>
<dbReference type="Pfam" id="PF07686">
    <property type="entry name" value="V-set"/>
    <property type="match status" value="1"/>
</dbReference>
<dbReference type="SMART" id="SM00406">
    <property type="entry name" value="IGv"/>
    <property type="match status" value="1"/>
</dbReference>
<dbReference type="SUPFAM" id="SSF48726">
    <property type="entry name" value="Immunoglobulin"/>
    <property type="match status" value="1"/>
</dbReference>
<dbReference type="PROSITE" id="PS50835">
    <property type="entry name" value="IG_LIKE"/>
    <property type="match status" value="1"/>
</dbReference>
<feature type="signal peptide">
    <location>
        <begin position="1"/>
        <end position="19"/>
    </location>
</feature>
<feature type="chain" id="PRO_0000015222" description="Ig heavy chain V region 1-62-3">
    <location>
        <begin position="20"/>
        <end position="117"/>
    </location>
</feature>
<feature type="region of interest" description="Framework-1">
    <location>
        <begin position="20"/>
        <end position="49"/>
    </location>
</feature>
<feature type="region of interest" description="Complementarity-determining-1">
    <location>
        <begin position="50"/>
        <end position="54"/>
    </location>
</feature>
<feature type="region of interest" description="Framework-2">
    <location>
        <begin position="55"/>
        <end position="68"/>
    </location>
</feature>
<feature type="region of interest" description="Complementarity-determining-2">
    <location>
        <begin position="69"/>
        <end position="85"/>
    </location>
</feature>
<feature type="region of interest" description="Framework-3">
    <location>
        <begin position="86"/>
        <end position="117"/>
    </location>
</feature>
<feature type="non-terminal residue">
    <location>
        <position position="117"/>
    </location>
</feature>
<comment type="miscellaneous">
    <text>This germline gene belongs to a set of closely related genes that could encode V regions of NPb antibodies.</text>
</comment>
<sequence length="117" mass="12921">MGWSCIMLFLAATATGVHFQVQLQQPGAELVKPGASVKLSSKASGYTFTSYWMHWVKQRPGRGLEWIGRIDPNSGGTKYNEKFKSKATLTVDKPSSTAYMQLSSLTSEDSAVYYCAR</sequence>
<gene>
    <name type="primary">Ighv1-62-3</name>
    <name type="synonym">Igh-VJ558</name>
</gene>
<accession>P01754</accession>
<accession>P11270</accession>
<keyword id="KW-1064">Adaptive immunity</keyword>
<keyword id="KW-0391">Immunity</keyword>
<keyword id="KW-1280">Immunoglobulin</keyword>
<keyword id="KW-1185">Reference proteome</keyword>
<keyword id="KW-0732">Signal</keyword>
<proteinExistence type="predicted"/>
<name>HVM10_MOUSE</name>